<name>PTH_XANOR</name>
<protein>
    <recommendedName>
        <fullName evidence="1">Peptidyl-tRNA hydrolase</fullName>
        <shortName evidence="1">Pth</shortName>
        <ecNumber evidence="1">3.1.1.29</ecNumber>
    </recommendedName>
</protein>
<gene>
    <name evidence="1" type="primary">pth</name>
    <name type="ordered locus">XOO3601</name>
</gene>
<organism>
    <name type="scientific">Xanthomonas oryzae pv. oryzae (strain KACC10331 / KXO85)</name>
    <dbReference type="NCBI Taxonomy" id="291331"/>
    <lineage>
        <taxon>Bacteria</taxon>
        <taxon>Pseudomonadati</taxon>
        <taxon>Pseudomonadota</taxon>
        <taxon>Gammaproteobacteria</taxon>
        <taxon>Lysobacterales</taxon>
        <taxon>Lysobacteraceae</taxon>
        <taxon>Xanthomonas</taxon>
    </lineage>
</organism>
<feature type="chain" id="PRO_0000187860" description="Peptidyl-tRNA hydrolase">
    <location>
        <begin position="1"/>
        <end position="194"/>
    </location>
</feature>
<feature type="active site" description="Proton acceptor" evidence="1">
    <location>
        <position position="22"/>
    </location>
</feature>
<feature type="binding site" evidence="1">
    <location>
        <position position="17"/>
    </location>
    <ligand>
        <name>tRNA</name>
        <dbReference type="ChEBI" id="CHEBI:17843"/>
    </ligand>
</feature>
<feature type="binding site" evidence="1">
    <location>
        <position position="68"/>
    </location>
    <ligand>
        <name>tRNA</name>
        <dbReference type="ChEBI" id="CHEBI:17843"/>
    </ligand>
</feature>
<feature type="binding site" evidence="1">
    <location>
        <position position="70"/>
    </location>
    <ligand>
        <name>tRNA</name>
        <dbReference type="ChEBI" id="CHEBI:17843"/>
    </ligand>
</feature>
<feature type="binding site" evidence="1">
    <location>
        <position position="116"/>
    </location>
    <ligand>
        <name>tRNA</name>
        <dbReference type="ChEBI" id="CHEBI:17843"/>
    </ligand>
</feature>
<feature type="site" description="Discriminates between blocked and unblocked aminoacyl-tRNA" evidence="1">
    <location>
        <position position="12"/>
    </location>
</feature>
<feature type="site" description="Stabilizes the basic form of H active site to accept a proton" evidence="1">
    <location>
        <position position="95"/>
    </location>
</feature>
<reference key="1">
    <citation type="journal article" date="2005" name="Nucleic Acids Res.">
        <title>The genome sequence of Xanthomonas oryzae pathovar oryzae KACC10331, the bacterial blight pathogen of rice.</title>
        <authorList>
            <person name="Lee B.-M."/>
            <person name="Park Y.-J."/>
            <person name="Park D.-S."/>
            <person name="Kang H.-W."/>
            <person name="Kim J.-G."/>
            <person name="Song E.-S."/>
            <person name="Park I.-C."/>
            <person name="Yoon U.-H."/>
            <person name="Hahn J.-H."/>
            <person name="Koo B.-S."/>
            <person name="Lee G.-B."/>
            <person name="Kim H."/>
            <person name="Park H.-S."/>
            <person name="Yoon K.-O."/>
            <person name="Kim J.-H."/>
            <person name="Jung C.-H."/>
            <person name="Koh N.-H."/>
            <person name="Seo J.-S."/>
            <person name="Go S.-J."/>
        </authorList>
    </citation>
    <scope>NUCLEOTIDE SEQUENCE [LARGE SCALE GENOMIC DNA]</scope>
    <source>
        <strain>KACC10331 / KXO85</strain>
    </source>
</reference>
<dbReference type="EC" id="3.1.1.29" evidence="1"/>
<dbReference type="EMBL" id="AE013598">
    <property type="protein sequence ID" value="AAW76855.1"/>
    <property type="status" value="ALT_INIT"/>
    <property type="molecule type" value="Genomic_DNA"/>
</dbReference>
<dbReference type="SMR" id="Q5GWR6"/>
<dbReference type="STRING" id="291331.XOO3601"/>
<dbReference type="KEGG" id="xoo:XOO3601"/>
<dbReference type="PATRIC" id="fig|291331.8.peg.3990"/>
<dbReference type="HOGENOM" id="CLU_062456_3_1_6"/>
<dbReference type="Proteomes" id="UP000006735">
    <property type="component" value="Chromosome"/>
</dbReference>
<dbReference type="GO" id="GO:0005737">
    <property type="term" value="C:cytoplasm"/>
    <property type="evidence" value="ECO:0007669"/>
    <property type="project" value="UniProtKB-SubCell"/>
</dbReference>
<dbReference type="GO" id="GO:0004045">
    <property type="term" value="F:peptidyl-tRNA hydrolase activity"/>
    <property type="evidence" value="ECO:0007669"/>
    <property type="project" value="UniProtKB-UniRule"/>
</dbReference>
<dbReference type="GO" id="GO:0000049">
    <property type="term" value="F:tRNA binding"/>
    <property type="evidence" value="ECO:0007669"/>
    <property type="project" value="UniProtKB-UniRule"/>
</dbReference>
<dbReference type="GO" id="GO:0006515">
    <property type="term" value="P:protein quality control for misfolded or incompletely synthesized proteins"/>
    <property type="evidence" value="ECO:0007669"/>
    <property type="project" value="UniProtKB-UniRule"/>
</dbReference>
<dbReference type="GO" id="GO:0072344">
    <property type="term" value="P:rescue of stalled ribosome"/>
    <property type="evidence" value="ECO:0007669"/>
    <property type="project" value="UniProtKB-UniRule"/>
</dbReference>
<dbReference type="CDD" id="cd00462">
    <property type="entry name" value="PTH"/>
    <property type="match status" value="1"/>
</dbReference>
<dbReference type="FunFam" id="3.40.50.1470:FF:000001">
    <property type="entry name" value="Peptidyl-tRNA hydrolase"/>
    <property type="match status" value="1"/>
</dbReference>
<dbReference type="Gene3D" id="3.40.50.1470">
    <property type="entry name" value="Peptidyl-tRNA hydrolase"/>
    <property type="match status" value="1"/>
</dbReference>
<dbReference type="HAMAP" id="MF_00083">
    <property type="entry name" value="Pept_tRNA_hydro_bact"/>
    <property type="match status" value="1"/>
</dbReference>
<dbReference type="InterPro" id="IPR001328">
    <property type="entry name" value="Pept_tRNA_hydro"/>
</dbReference>
<dbReference type="InterPro" id="IPR018171">
    <property type="entry name" value="Pept_tRNA_hydro_CS"/>
</dbReference>
<dbReference type="InterPro" id="IPR036416">
    <property type="entry name" value="Pept_tRNA_hydro_sf"/>
</dbReference>
<dbReference type="NCBIfam" id="TIGR00447">
    <property type="entry name" value="pth"/>
    <property type="match status" value="1"/>
</dbReference>
<dbReference type="PANTHER" id="PTHR17224">
    <property type="entry name" value="PEPTIDYL-TRNA HYDROLASE"/>
    <property type="match status" value="1"/>
</dbReference>
<dbReference type="PANTHER" id="PTHR17224:SF1">
    <property type="entry name" value="PEPTIDYL-TRNA HYDROLASE"/>
    <property type="match status" value="1"/>
</dbReference>
<dbReference type="Pfam" id="PF01195">
    <property type="entry name" value="Pept_tRNA_hydro"/>
    <property type="match status" value="1"/>
</dbReference>
<dbReference type="SUPFAM" id="SSF53178">
    <property type="entry name" value="Peptidyl-tRNA hydrolase-like"/>
    <property type="match status" value="1"/>
</dbReference>
<dbReference type="PROSITE" id="PS01195">
    <property type="entry name" value="PEPT_TRNA_HYDROL_1"/>
    <property type="match status" value="1"/>
</dbReference>
<evidence type="ECO:0000255" key="1">
    <source>
        <dbReference type="HAMAP-Rule" id="MF_00083"/>
    </source>
</evidence>
<evidence type="ECO:0000305" key="2"/>
<proteinExistence type="inferred from homology"/>
<keyword id="KW-0963">Cytoplasm</keyword>
<keyword id="KW-0378">Hydrolase</keyword>
<keyword id="KW-1185">Reference proteome</keyword>
<keyword id="KW-0694">RNA-binding</keyword>
<keyword id="KW-0820">tRNA-binding</keyword>
<accession>Q5GWR6</accession>
<comment type="function">
    <text evidence="1">Hydrolyzes ribosome-free peptidyl-tRNAs (with 1 or more amino acids incorporated), which drop off the ribosome during protein synthesis, or as a result of ribosome stalling.</text>
</comment>
<comment type="function">
    <text evidence="1">Catalyzes the release of premature peptidyl moieties from peptidyl-tRNA molecules trapped in stalled 50S ribosomal subunits, and thus maintains levels of free tRNAs and 50S ribosomes.</text>
</comment>
<comment type="catalytic activity">
    <reaction evidence="1">
        <text>an N-acyl-L-alpha-aminoacyl-tRNA + H2O = an N-acyl-L-amino acid + a tRNA + H(+)</text>
        <dbReference type="Rhea" id="RHEA:54448"/>
        <dbReference type="Rhea" id="RHEA-COMP:10123"/>
        <dbReference type="Rhea" id="RHEA-COMP:13883"/>
        <dbReference type="ChEBI" id="CHEBI:15377"/>
        <dbReference type="ChEBI" id="CHEBI:15378"/>
        <dbReference type="ChEBI" id="CHEBI:59874"/>
        <dbReference type="ChEBI" id="CHEBI:78442"/>
        <dbReference type="ChEBI" id="CHEBI:138191"/>
        <dbReference type="EC" id="3.1.1.29"/>
    </reaction>
</comment>
<comment type="subunit">
    <text evidence="1">Monomer.</text>
</comment>
<comment type="subcellular location">
    <subcellularLocation>
        <location evidence="1">Cytoplasm</location>
    </subcellularLocation>
</comment>
<comment type="similarity">
    <text evidence="1">Belongs to the PTH family.</text>
</comment>
<comment type="sequence caution" evidence="2">
    <conflict type="erroneous initiation">
        <sequence resource="EMBL-CDS" id="AAW76855"/>
    </conflict>
    <text>Extended N-terminus.</text>
</comment>
<sequence>MSALRLIVGLGNPGQEHAQTRHNAGFRFVDSLIERSGARWALDSKLFGETAKVDIAGQPVWLLKPATFMNLSGKSITAALRFWKIEPEHLLVAHDELDLAPGTARLKFDGGHGGQNGLRDTIGLLGHGKFHRLRVGIGHPGHKDRVVPWVLGRAGREDDAAIGTAIDAAIDVLPLAMEGHFSEAMKRLHTSRDA</sequence>